<accession>O57427</accession>
<name>HYAS2_XENLA</name>
<protein>
    <recommendedName>
        <fullName>Hyaluronan synthase 2</fullName>
        <ecNumber evidence="2">2.4.1.212</ecNumber>
    </recommendedName>
    <alternativeName>
        <fullName>Hyaluronate synthase 2</fullName>
    </alternativeName>
    <alternativeName>
        <fullName>Hyaluronic acid synthase 2</fullName>
        <shortName>HA synthase 2</shortName>
        <shortName>xHAS2</shortName>
    </alternativeName>
</protein>
<gene>
    <name type="primary">has2</name>
</gene>
<reference key="1">
    <citation type="journal article" date="2000" name="Mech. Dev.">
        <title>Synthesis of hyaluronan of distinctly different chain length is regulated by the differential expression of Xhas1 and 2 during early development of Xenopus laevis.</title>
        <authorList>
            <person name="Koeprunner M."/>
            <person name="Muellegger J."/>
            <person name="Lepperdinger G."/>
        </authorList>
    </citation>
    <scope>NUCLEOTIDE SEQUENCE [MRNA]</scope>
</reference>
<reference key="2">
    <citation type="journal article" date="1998" name="J. Biol. Chem.">
        <title>Characterization and molecular evolution of a vertebrate hyaluronan synthase gene family.</title>
        <authorList>
            <person name="Spicer A.P."/>
            <person name="McDonald J.A."/>
        </authorList>
    </citation>
    <scope>NUCLEOTIDE SEQUENCE [GENOMIC DNA] OF 272-461</scope>
</reference>
<sequence>MHCERFICILRIIGTTLFGVSLLLGISAAYIVGYQFIQTDNYYFSFGLYGAILALHLIIQSLFAFLEHRKMKRSLETPIKLNKSVALCIAAYQEDEDYLRKCLLSVKRLTYPGMKVIMVIDGNSDDDLYMMNIFREIMGNDSCATYVWKNNFHMKGPNETDETHRESMQHVTQMVLSNRNVCIMQKWNGKREVMYTAFKALGRSVDYVQVCDSDTVLDPASSVEMVKVLEEDIMVGGVGGDVQILNKYDSWISFLSSVRYWMAFNIERACQSYFGCVQCISGPLGMYRNSLLHEFIEDWYNQEFLGSQCSFGDDRHLTNRVLSLGYATKYTARSKCLTETPTEYLRWLNQQTRWSKSYFREWLYNSLWFHKHHLWMTYEAVITGFFPFFLIATVIQLFYRGRIWNILLFLLTVQLVGLIKSSFASALRGNIVMVFMSFYSVLYMSSLLPAKMFAIATINKAGWGTSGRKTIVVNFIGLIPITVWFTILLGGVCYTIWRETKKPFSESEKIVLAVGAILYACYWVMLLTMYVSLVMKCGRRRKEPQHDLVLA</sequence>
<evidence type="ECO:0000250" key="1">
    <source>
        <dbReference type="UniProtKB" id="P70312"/>
    </source>
</evidence>
<evidence type="ECO:0000250" key="2">
    <source>
        <dbReference type="UniProtKB" id="Q92819"/>
    </source>
</evidence>
<evidence type="ECO:0000255" key="3"/>
<evidence type="ECO:0000305" key="4"/>
<feature type="chain" id="PRO_0000197177" description="Hyaluronan synthase 2">
    <location>
        <begin position="1"/>
        <end position="551"/>
    </location>
</feature>
<feature type="topological domain" description="Cytoplasmic" evidence="3">
    <location>
        <begin position="1"/>
        <end position="11"/>
    </location>
</feature>
<feature type="transmembrane region" description="Helical; Name=1" evidence="3">
    <location>
        <begin position="12"/>
        <end position="32"/>
    </location>
</feature>
<feature type="topological domain" description="Extracellular" evidence="3">
    <location>
        <begin position="33"/>
        <end position="45"/>
    </location>
</feature>
<feature type="transmembrane region" description="Helical; Name=2" evidence="3">
    <location>
        <begin position="46"/>
        <end position="66"/>
    </location>
</feature>
<feature type="topological domain" description="Cytoplasmic" evidence="3">
    <location>
        <begin position="67"/>
        <end position="374"/>
    </location>
</feature>
<feature type="transmembrane region" description="Helical; Name=3" evidence="3">
    <location>
        <begin position="375"/>
        <end position="395"/>
    </location>
</feature>
<feature type="topological domain" description="Extracellular" evidence="3">
    <location>
        <begin position="396"/>
        <end position="402"/>
    </location>
</feature>
<feature type="transmembrane region" description="Helical; Name=4" evidence="3">
    <location>
        <begin position="403"/>
        <end position="423"/>
    </location>
</feature>
<feature type="topological domain" description="Cytoplasmic" evidence="3">
    <location>
        <begin position="424"/>
        <end position="429"/>
    </location>
</feature>
<feature type="transmembrane region" description="Helical; Name=5" evidence="3">
    <location>
        <begin position="430"/>
        <end position="450"/>
    </location>
</feature>
<feature type="topological domain" description="Extracellular" evidence="3">
    <location>
        <begin position="451"/>
        <end position="470"/>
    </location>
</feature>
<feature type="transmembrane region" description="Helical; Name=6" evidence="3">
    <location>
        <begin position="471"/>
        <end position="491"/>
    </location>
</feature>
<feature type="topological domain" description="Cytoplasmic" evidence="3">
    <location>
        <begin position="492"/>
        <end position="509"/>
    </location>
</feature>
<feature type="transmembrane region" description="Helical; Name=7" evidence="3">
    <location>
        <begin position="510"/>
        <end position="530"/>
    </location>
</feature>
<feature type="topological domain" description="Extracellular" evidence="3">
    <location>
        <begin position="531"/>
        <end position="551"/>
    </location>
</feature>
<proteinExistence type="evidence at transcript level"/>
<keyword id="KW-1003">Cell membrane</keyword>
<keyword id="KW-0256">Endoplasmic reticulum</keyword>
<keyword id="KW-0328">Glycosyltransferase</keyword>
<keyword id="KW-0333">Golgi apparatus</keyword>
<keyword id="KW-0458">Lysosome</keyword>
<keyword id="KW-0472">Membrane</keyword>
<keyword id="KW-1185">Reference proteome</keyword>
<keyword id="KW-0808">Transferase</keyword>
<keyword id="KW-0812">Transmembrane</keyword>
<keyword id="KW-1133">Transmembrane helix</keyword>
<organism>
    <name type="scientific">Xenopus laevis</name>
    <name type="common">African clawed frog</name>
    <dbReference type="NCBI Taxonomy" id="8355"/>
    <lineage>
        <taxon>Eukaryota</taxon>
        <taxon>Metazoa</taxon>
        <taxon>Chordata</taxon>
        <taxon>Craniata</taxon>
        <taxon>Vertebrata</taxon>
        <taxon>Euteleostomi</taxon>
        <taxon>Amphibia</taxon>
        <taxon>Batrachia</taxon>
        <taxon>Anura</taxon>
        <taxon>Pipoidea</taxon>
        <taxon>Pipidae</taxon>
        <taxon>Xenopodinae</taxon>
        <taxon>Xenopus</taxon>
        <taxon>Xenopus</taxon>
    </lineage>
</organism>
<dbReference type="EC" id="2.4.1.212" evidence="2"/>
<dbReference type="EMBL" id="AF168465">
    <property type="protein sequence ID" value="AAD45813.1"/>
    <property type="molecule type" value="mRNA"/>
</dbReference>
<dbReference type="EMBL" id="AF015779">
    <property type="protein sequence ID" value="AAB94540.1"/>
    <property type="molecule type" value="Genomic_DNA"/>
</dbReference>
<dbReference type="RefSeq" id="NP_001083837.1">
    <property type="nucleotide sequence ID" value="NM_001090368.1"/>
</dbReference>
<dbReference type="SMR" id="O57427"/>
<dbReference type="CAZy" id="GT2">
    <property type="family name" value="Glycosyltransferase Family 2"/>
</dbReference>
<dbReference type="GeneID" id="399146"/>
<dbReference type="KEGG" id="xla:399146"/>
<dbReference type="AGR" id="Xenbase:XB-GENE-5775604"/>
<dbReference type="CTD" id="399146"/>
<dbReference type="Xenbase" id="XB-GENE-5775604">
    <property type="gene designation" value="has2.S"/>
</dbReference>
<dbReference type="OrthoDB" id="9876900at2759"/>
<dbReference type="UniPathway" id="UPA00341"/>
<dbReference type="Proteomes" id="UP000186698">
    <property type="component" value="Chromosome 6S"/>
</dbReference>
<dbReference type="Bgee" id="399146">
    <property type="expression patterns" value="Expressed in gastrula and 7 other cell types or tissues"/>
</dbReference>
<dbReference type="GO" id="GO:0005789">
    <property type="term" value="C:endoplasmic reticulum membrane"/>
    <property type="evidence" value="ECO:0007669"/>
    <property type="project" value="UniProtKB-SubCell"/>
</dbReference>
<dbReference type="GO" id="GO:1903561">
    <property type="term" value="C:extracellular vesicle"/>
    <property type="evidence" value="ECO:0000250"/>
    <property type="project" value="UniProtKB"/>
</dbReference>
<dbReference type="GO" id="GO:0005794">
    <property type="term" value="C:Golgi apparatus"/>
    <property type="evidence" value="ECO:0000250"/>
    <property type="project" value="UniProtKB"/>
</dbReference>
<dbReference type="GO" id="GO:0000139">
    <property type="term" value="C:Golgi membrane"/>
    <property type="evidence" value="ECO:0007669"/>
    <property type="project" value="UniProtKB-SubCell"/>
</dbReference>
<dbReference type="GO" id="GO:0005764">
    <property type="term" value="C:lysosome"/>
    <property type="evidence" value="ECO:0007669"/>
    <property type="project" value="UniProtKB-SubCell"/>
</dbReference>
<dbReference type="GO" id="GO:0005886">
    <property type="term" value="C:plasma membrane"/>
    <property type="evidence" value="ECO:0000250"/>
    <property type="project" value="UniProtKB"/>
</dbReference>
<dbReference type="GO" id="GO:0050501">
    <property type="term" value="F:hyaluronan synthase activity"/>
    <property type="evidence" value="ECO:0000250"/>
    <property type="project" value="UniProtKB"/>
</dbReference>
<dbReference type="GO" id="GO:0036302">
    <property type="term" value="P:atrioventricular canal development"/>
    <property type="evidence" value="ECO:0000250"/>
    <property type="project" value="UniProtKB"/>
</dbReference>
<dbReference type="GO" id="GO:0090500">
    <property type="term" value="P:endocardial cushion to mesenchymal transition"/>
    <property type="evidence" value="ECO:0000250"/>
    <property type="project" value="UniProtKB"/>
</dbReference>
<dbReference type="GO" id="GO:0085029">
    <property type="term" value="P:extracellular matrix assembly"/>
    <property type="evidence" value="ECO:0000250"/>
    <property type="project" value="UniProtKB"/>
</dbReference>
<dbReference type="GO" id="GO:0030213">
    <property type="term" value="P:hyaluronan biosynthetic process"/>
    <property type="evidence" value="ECO:0000250"/>
    <property type="project" value="UniProtKB"/>
</dbReference>
<dbReference type="GO" id="GO:0000271">
    <property type="term" value="P:polysaccharide biosynthetic process"/>
    <property type="evidence" value="ECO:0000250"/>
    <property type="project" value="UniProtKB"/>
</dbReference>
<dbReference type="GO" id="GO:0035810">
    <property type="term" value="P:positive regulation of urine volume"/>
    <property type="evidence" value="ECO:0000250"/>
    <property type="project" value="UniProtKB"/>
</dbReference>
<dbReference type="GO" id="GO:0070295">
    <property type="term" value="P:renal water absorption"/>
    <property type="evidence" value="ECO:0000250"/>
    <property type="project" value="UniProtKB"/>
</dbReference>
<dbReference type="GO" id="GO:0001570">
    <property type="term" value="P:vasculogenesis"/>
    <property type="evidence" value="ECO:0000250"/>
    <property type="project" value="UniProtKB"/>
</dbReference>
<dbReference type="CDD" id="cd06434">
    <property type="entry name" value="GT2_HAS"/>
    <property type="match status" value="1"/>
</dbReference>
<dbReference type="Gene3D" id="3.90.550.10">
    <property type="entry name" value="Spore Coat Polysaccharide Biosynthesis Protein SpsA, Chain A"/>
    <property type="match status" value="1"/>
</dbReference>
<dbReference type="InterPro" id="IPR001173">
    <property type="entry name" value="Glyco_trans_2-like"/>
</dbReference>
<dbReference type="InterPro" id="IPR029044">
    <property type="entry name" value="Nucleotide-diphossugar_trans"/>
</dbReference>
<dbReference type="PANTHER" id="PTHR22913">
    <property type="entry name" value="HYALURONAN SYNTHASE"/>
    <property type="match status" value="1"/>
</dbReference>
<dbReference type="PANTHER" id="PTHR22913:SF7">
    <property type="entry name" value="HYALURONAN SYNTHASE 2"/>
    <property type="match status" value="1"/>
</dbReference>
<dbReference type="Pfam" id="PF03142">
    <property type="entry name" value="Chitin_synth_2"/>
    <property type="match status" value="1"/>
</dbReference>
<dbReference type="Pfam" id="PF00535">
    <property type="entry name" value="Glycos_transf_2"/>
    <property type="match status" value="1"/>
</dbReference>
<dbReference type="SUPFAM" id="SSF53448">
    <property type="entry name" value="Nucleotide-diphospho-sugar transferases"/>
    <property type="match status" value="1"/>
</dbReference>
<comment type="function">
    <text evidence="1 2">Catalyzes the addition of GlcNAc or GlcUA monosaccharides to the nascent hyaluronan polymer. Therefore, it is essential to hyaluronan synthesis a major component of most extracellular matrices that has a structural role in tissues architectures and regulates cell adhesion, migration and differentiation (By similarity). This is one of three isoenzymes responsible for cellular hyaluronan synthesis and it is particularly responsible for the synthesis of high molecular mass hyaluronan (By similarity).</text>
</comment>
<comment type="catalytic activity">
    <reaction evidence="2">
        <text>[hyaluronan](n) + UDP-N-acetyl-alpha-D-glucosamine = N-acetyl-beta-D-glucosaminyl-(1-&gt;4)-[hyaluronan](n) + UDP + H(+)</text>
        <dbReference type="Rhea" id="RHEA:20465"/>
        <dbReference type="Rhea" id="RHEA-COMP:12583"/>
        <dbReference type="Rhea" id="RHEA-COMP:12585"/>
        <dbReference type="ChEBI" id="CHEBI:15378"/>
        <dbReference type="ChEBI" id="CHEBI:57705"/>
        <dbReference type="ChEBI" id="CHEBI:58223"/>
        <dbReference type="ChEBI" id="CHEBI:132153"/>
        <dbReference type="ChEBI" id="CHEBI:132154"/>
        <dbReference type="EC" id="2.4.1.212"/>
    </reaction>
    <physiologicalReaction direction="left-to-right" evidence="2">
        <dbReference type="Rhea" id="RHEA:20466"/>
    </physiologicalReaction>
</comment>
<comment type="catalytic activity">
    <reaction evidence="2">
        <text>N-acetyl-beta-D-glucosaminyl-(1-&gt;4)-[hyaluronan](n) + UDP-alpha-D-glucuronate = [hyaluronan](n+1) + UDP + H(+)</text>
        <dbReference type="Rhea" id="RHEA:12528"/>
        <dbReference type="Rhea" id="RHEA-COMP:12585"/>
        <dbReference type="Rhea" id="RHEA-COMP:12587"/>
        <dbReference type="ChEBI" id="CHEBI:15378"/>
        <dbReference type="ChEBI" id="CHEBI:58052"/>
        <dbReference type="ChEBI" id="CHEBI:58223"/>
        <dbReference type="ChEBI" id="CHEBI:132153"/>
        <dbReference type="ChEBI" id="CHEBI:132154"/>
        <dbReference type="EC" id="2.4.1.212"/>
    </reaction>
    <physiologicalReaction direction="left-to-right" evidence="2">
        <dbReference type="Rhea" id="RHEA:12529"/>
    </physiologicalReaction>
</comment>
<comment type="cofactor">
    <cofactor>
        <name>Mg(2+)</name>
        <dbReference type="ChEBI" id="CHEBI:18420"/>
    </cofactor>
</comment>
<comment type="pathway">
    <text evidence="2">Glycan biosynthesis; hyaluronan biosynthesis.</text>
</comment>
<comment type="subunit">
    <text evidence="2">Homodimer; dimerization promotes enzymatic activity.</text>
</comment>
<comment type="subcellular location">
    <subcellularLocation>
        <location evidence="2">Cell membrane</location>
        <topology evidence="3">Multi-pass membrane protein</topology>
    </subcellularLocation>
    <subcellularLocation>
        <location evidence="2">Endoplasmic reticulum membrane</location>
        <topology evidence="3">Multi-pass membrane protein</topology>
    </subcellularLocation>
    <subcellularLocation>
        <location evidence="2">Vesicle</location>
    </subcellularLocation>
    <subcellularLocation>
        <location evidence="2">Golgi apparatus membrane</location>
        <topology evidence="3">Multi-pass membrane protein</topology>
    </subcellularLocation>
    <subcellularLocation>
        <location evidence="2">Lysosome</location>
    </subcellularLocation>
    <text evidence="2">Travels from endoplasmic reticulum (ER), Golgi to plasma membrane and either back to endosomes and lysosomes, or out into extracellular vesicles. Post-translational modifications control HAS2 trafficking.</text>
</comment>
<comment type="similarity">
    <text evidence="4">Belongs to the NodC/HAS family.</text>
</comment>